<feature type="chain" id="PRO_1000020077" description="Methionyl-tRNA formyltransferase">
    <location>
        <begin position="1"/>
        <end position="305"/>
    </location>
</feature>
<feature type="binding site" evidence="1">
    <location>
        <begin position="111"/>
        <end position="114"/>
    </location>
    <ligand>
        <name>(6S)-5,6,7,8-tetrahydrofolate</name>
        <dbReference type="ChEBI" id="CHEBI:57453"/>
    </ligand>
</feature>
<keyword id="KW-0648">Protein biosynthesis</keyword>
<keyword id="KW-0808">Transferase</keyword>
<name>FMT_HELAH</name>
<sequence length="305" mass="33869">MRIVFMGTPGFAEVILRALIENQNNNIEVVGLFTQMDKPFGRKKELKAPETKTYILENHSNIPIFQPQSLKEPEVQILKGLKPDFIVVVAYGKILPKEVLKIAPCINVHASLLPKYRGASPVHEMILNDDTIYGVSAMLMDLELDSGDILGSASFLREGYLNLETLSLKLAHMGATLLLSTLKNFHSITPKPQDHASATFCKKITKADGLVGFKDAKSLFLKSLAFKTWPEIFLENNLKLLGVELVENEKSHREGEILRIDERGVLVGCLKGSVRIARLQAVGKKPLKAKDYLNGRRLKAGDILA</sequence>
<proteinExistence type="inferred from homology"/>
<gene>
    <name evidence="1" type="primary">fmt</name>
    <name type="ordered locus">Hac_0573</name>
</gene>
<dbReference type="EC" id="2.1.2.9" evidence="1"/>
<dbReference type="EMBL" id="AM260522">
    <property type="protein sequence ID" value="CAJ99389.1"/>
    <property type="molecule type" value="Genomic_DNA"/>
</dbReference>
<dbReference type="RefSeq" id="WP_011577503.1">
    <property type="nucleotide sequence ID" value="NC_008229.1"/>
</dbReference>
<dbReference type="SMR" id="Q17Y87"/>
<dbReference type="STRING" id="382638.Hac_0573"/>
<dbReference type="GeneID" id="31758050"/>
<dbReference type="KEGG" id="hac:Hac_0573"/>
<dbReference type="eggNOG" id="COG0223">
    <property type="taxonomic scope" value="Bacteria"/>
</dbReference>
<dbReference type="HOGENOM" id="CLU_033347_1_1_7"/>
<dbReference type="OrthoDB" id="9802815at2"/>
<dbReference type="BioCyc" id="HACI382638:HAC_RS02530-MONOMER"/>
<dbReference type="Proteomes" id="UP000000775">
    <property type="component" value="Chromosome"/>
</dbReference>
<dbReference type="GO" id="GO:0005829">
    <property type="term" value="C:cytosol"/>
    <property type="evidence" value="ECO:0007669"/>
    <property type="project" value="TreeGrafter"/>
</dbReference>
<dbReference type="GO" id="GO:0004479">
    <property type="term" value="F:methionyl-tRNA formyltransferase activity"/>
    <property type="evidence" value="ECO:0007669"/>
    <property type="project" value="UniProtKB-UniRule"/>
</dbReference>
<dbReference type="CDD" id="cd08646">
    <property type="entry name" value="FMT_core_Met-tRNA-FMT_N"/>
    <property type="match status" value="1"/>
</dbReference>
<dbReference type="CDD" id="cd08704">
    <property type="entry name" value="Met_tRNA_FMT_C"/>
    <property type="match status" value="1"/>
</dbReference>
<dbReference type="Gene3D" id="3.40.50.12230">
    <property type="match status" value="1"/>
</dbReference>
<dbReference type="HAMAP" id="MF_00182">
    <property type="entry name" value="Formyl_trans"/>
    <property type="match status" value="1"/>
</dbReference>
<dbReference type="InterPro" id="IPR005794">
    <property type="entry name" value="Fmt"/>
</dbReference>
<dbReference type="InterPro" id="IPR005793">
    <property type="entry name" value="Formyl_trans_C"/>
</dbReference>
<dbReference type="InterPro" id="IPR002376">
    <property type="entry name" value="Formyl_transf_N"/>
</dbReference>
<dbReference type="InterPro" id="IPR036477">
    <property type="entry name" value="Formyl_transf_N_sf"/>
</dbReference>
<dbReference type="InterPro" id="IPR011034">
    <property type="entry name" value="Formyl_transferase-like_C_sf"/>
</dbReference>
<dbReference type="InterPro" id="IPR044135">
    <property type="entry name" value="Met-tRNA-FMT_C"/>
</dbReference>
<dbReference type="InterPro" id="IPR041711">
    <property type="entry name" value="Met-tRNA-FMT_N"/>
</dbReference>
<dbReference type="NCBIfam" id="TIGR00460">
    <property type="entry name" value="fmt"/>
    <property type="match status" value="1"/>
</dbReference>
<dbReference type="PANTHER" id="PTHR11138">
    <property type="entry name" value="METHIONYL-TRNA FORMYLTRANSFERASE"/>
    <property type="match status" value="1"/>
</dbReference>
<dbReference type="PANTHER" id="PTHR11138:SF5">
    <property type="entry name" value="METHIONYL-TRNA FORMYLTRANSFERASE, MITOCHONDRIAL"/>
    <property type="match status" value="1"/>
</dbReference>
<dbReference type="Pfam" id="PF02911">
    <property type="entry name" value="Formyl_trans_C"/>
    <property type="match status" value="1"/>
</dbReference>
<dbReference type="Pfam" id="PF00551">
    <property type="entry name" value="Formyl_trans_N"/>
    <property type="match status" value="1"/>
</dbReference>
<dbReference type="SUPFAM" id="SSF50486">
    <property type="entry name" value="FMT C-terminal domain-like"/>
    <property type="match status" value="1"/>
</dbReference>
<dbReference type="SUPFAM" id="SSF53328">
    <property type="entry name" value="Formyltransferase"/>
    <property type="match status" value="1"/>
</dbReference>
<accession>Q17Y87</accession>
<evidence type="ECO:0000255" key="1">
    <source>
        <dbReference type="HAMAP-Rule" id="MF_00182"/>
    </source>
</evidence>
<reference key="1">
    <citation type="journal article" date="2006" name="PLoS Genet.">
        <title>Who ate whom? Adaptive Helicobacter genomic changes that accompanied a host jump from early humans to large felines.</title>
        <authorList>
            <person name="Eppinger M."/>
            <person name="Baar C."/>
            <person name="Linz B."/>
            <person name="Raddatz G."/>
            <person name="Lanz C."/>
            <person name="Keller H."/>
            <person name="Morelli G."/>
            <person name="Gressmann H."/>
            <person name="Achtman M."/>
            <person name="Schuster S.C."/>
        </authorList>
    </citation>
    <scope>NUCLEOTIDE SEQUENCE [LARGE SCALE GENOMIC DNA]</scope>
    <source>
        <strain>Sheeba</strain>
    </source>
</reference>
<organism>
    <name type="scientific">Helicobacter acinonychis (strain Sheeba)</name>
    <dbReference type="NCBI Taxonomy" id="382638"/>
    <lineage>
        <taxon>Bacteria</taxon>
        <taxon>Pseudomonadati</taxon>
        <taxon>Campylobacterota</taxon>
        <taxon>Epsilonproteobacteria</taxon>
        <taxon>Campylobacterales</taxon>
        <taxon>Helicobacteraceae</taxon>
        <taxon>Helicobacter</taxon>
    </lineage>
</organism>
<protein>
    <recommendedName>
        <fullName evidence="1">Methionyl-tRNA formyltransferase</fullName>
        <ecNumber evidence="1">2.1.2.9</ecNumber>
    </recommendedName>
</protein>
<comment type="function">
    <text evidence="1">Attaches a formyl group to the free amino group of methionyl-tRNA(fMet). The formyl group appears to play a dual role in the initiator identity of N-formylmethionyl-tRNA by promoting its recognition by IF2 and preventing the misappropriation of this tRNA by the elongation apparatus.</text>
</comment>
<comment type="catalytic activity">
    <reaction evidence="1">
        <text>L-methionyl-tRNA(fMet) + (6R)-10-formyltetrahydrofolate = N-formyl-L-methionyl-tRNA(fMet) + (6S)-5,6,7,8-tetrahydrofolate + H(+)</text>
        <dbReference type="Rhea" id="RHEA:24380"/>
        <dbReference type="Rhea" id="RHEA-COMP:9952"/>
        <dbReference type="Rhea" id="RHEA-COMP:9953"/>
        <dbReference type="ChEBI" id="CHEBI:15378"/>
        <dbReference type="ChEBI" id="CHEBI:57453"/>
        <dbReference type="ChEBI" id="CHEBI:78530"/>
        <dbReference type="ChEBI" id="CHEBI:78844"/>
        <dbReference type="ChEBI" id="CHEBI:195366"/>
        <dbReference type="EC" id="2.1.2.9"/>
    </reaction>
</comment>
<comment type="similarity">
    <text evidence="1">Belongs to the Fmt family.</text>
</comment>